<evidence type="ECO:0000255" key="1">
    <source>
        <dbReference type="HAMAP-Rule" id="MF_01903"/>
    </source>
</evidence>
<dbReference type="EC" id="2.4.2.-" evidence="1"/>
<dbReference type="EC" id="2.4.2.22" evidence="1"/>
<dbReference type="EMBL" id="AE017340">
    <property type="protein sequence ID" value="AAV81727.1"/>
    <property type="molecule type" value="Genomic_DNA"/>
</dbReference>
<dbReference type="RefSeq" id="WP_011234138.1">
    <property type="nucleotide sequence ID" value="NC_006512.1"/>
</dbReference>
<dbReference type="SMR" id="Q5QW45"/>
<dbReference type="STRING" id="283942.IL0887"/>
<dbReference type="GeneID" id="41336043"/>
<dbReference type="KEGG" id="ilo:IL0887"/>
<dbReference type="eggNOG" id="COG2236">
    <property type="taxonomic scope" value="Bacteria"/>
</dbReference>
<dbReference type="HOGENOM" id="CLU_080904_3_0_6"/>
<dbReference type="OrthoDB" id="9789690at2"/>
<dbReference type="UniPathway" id="UPA00602">
    <property type="reaction ID" value="UER00658"/>
</dbReference>
<dbReference type="UniPathway" id="UPA00909">
    <property type="reaction ID" value="UER00887"/>
</dbReference>
<dbReference type="Proteomes" id="UP000001171">
    <property type="component" value="Chromosome"/>
</dbReference>
<dbReference type="GO" id="GO:0005829">
    <property type="term" value="C:cytosol"/>
    <property type="evidence" value="ECO:0007669"/>
    <property type="project" value="TreeGrafter"/>
</dbReference>
<dbReference type="GO" id="GO:0005886">
    <property type="term" value="C:plasma membrane"/>
    <property type="evidence" value="ECO:0007669"/>
    <property type="project" value="UniProtKB-SubCell"/>
</dbReference>
<dbReference type="GO" id="GO:0052657">
    <property type="term" value="F:guanine phosphoribosyltransferase activity"/>
    <property type="evidence" value="ECO:0007669"/>
    <property type="project" value="RHEA"/>
</dbReference>
<dbReference type="GO" id="GO:0004422">
    <property type="term" value="F:hypoxanthine phosphoribosyltransferase activity"/>
    <property type="evidence" value="ECO:0007669"/>
    <property type="project" value="TreeGrafter"/>
</dbReference>
<dbReference type="GO" id="GO:0000287">
    <property type="term" value="F:magnesium ion binding"/>
    <property type="evidence" value="ECO:0007669"/>
    <property type="project" value="UniProtKB-UniRule"/>
</dbReference>
<dbReference type="GO" id="GO:0000310">
    <property type="term" value="F:xanthine phosphoribosyltransferase activity"/>
    <property type="evidence" value="ECO:0007669"/>
    <property type="project" value="UniProtKB-UniRule"/>
</dbReference>
<dbReference type="GO" id="GO:0032263">
    <property type="term" value="P:GMP salvage"/>
    <property type="evidence" value="ECO:0007669"/>
    <property type="project" value="UniProtKB-UniRule"/>
</dbReference>
<dbReference type="GO" id="GO:0032264">
    <property type="term" value="P:IMP salvage"/>
    <property type="evidence" value="ECO:0007669"/>
    <property type="project" value="TreeGrafter"/>
</dbReference>
<dbReference type="GO" id="GO:0006166">
    <property type="term" value="P:purine ribonucleoside salvage"/>
    <property type="evidence" value="ECO:0007669"/>
    <property type="project" value="UniProtKB-KW"/>
</dbReference>
<dbReference type="GO" id="GO:0032265">
    <property type="term" value="P:XMP salvage"/>
    <property type="evidence" value="ECO:0007669"/>
    <property type="project" value="UniProtKB-UniRule"/>
</dbReference>
<dbReference type="CDD" id="cd06223">
    <property type="entry name" value="PRTases_typeI"/>
    <property type="match status" value="1"/>
</dbReference>
<dbReference type="Gene3D" id="3.40.50.2020">
    <property type="match status" value="1"/>
</dbReference>
<dbReference type="HAMAP" id="MF_01903">
    <property type="entry name" value="XGPRT"/>
    <property type="match status" value="1"/>
</dbReference>
<dbReference type="InterPro" id="IPR000836">
    <property type="entry name" value="PRibTrfase_dom"/>
</dbReference>
<dbReference type="InterPro" id="IPR029057">
    <property type="entry name" value="PRTase-like"/>
</dbReference>
<dbReference type="InterPro" id="IPR023747">
    <property type="entry name" value="Xanthine_Guanine_PRibTrfase"/>
</dbReference>
<dbReference type="NCBIfam" id="NF006613">
    <property type="entry name" value="PRK09177.1"/>
    <property type="match status" value="1"/>
</dbReference>
<dbReference type="PANTHER" id="PTHR39563">
    <property type="entry name" value="XANTHINE PHOSPHORIBOSYLTRANSFERASE"/>
    <property type="match status" value="1"/>
</dbReference>
<dbReference type="PANTHER" id="PTHR39563:SF1">
    <property type="entry name" value="XANTHINE-GUANINE PHOSPHORIBOSYLTRANSFERASE"/>
    <property type="match status" value="1"/>
</dbReference>
<dbReference type="Pfam" id="PF00156">
    <property type="entry name" value="Pribosyltran"/>
    <property type="match status" value="1"/>
</dbReference>
<dbReference type="SUPFAM" id="SSF53271">
    <property type="entry name" value="PRTase-like"/>
    <property type="match status" value="1"/>
</dbReference>
<dbReference type="PROSITE" id="PS00103">
    <property type="entry name" value="PUR_PYR_PR_TRANSFER"/>
    <property type="match status" value="1"/>
</dbReference>
<comment type="function">
    <text evidence="1">Purine salvage pathway enzyme that catalyzes the transfer of the ribosyl-5-phosphate group from 5-phospho-alpha-D-ribose 1-diphosphate (PRPP) to the N9 position of the 6-oxopurines guanine and xanthine to form the corresponding ribonucleotides GMP (guanosine 5'-monophosphate) and XMP (xanthosine 5'-monophosphate), with the release of PPi. To a lesser extent, also acts on hypoxanthine.</text>
</comment>
<comment type="catalytic activity">
    <reaction evidence="1">
        <text>GMP + diphosphate = guanine + 5-phospho-alpha-D-ribose 1-diphosphate</text>
        <dbReference type="Rhea" id="RHEA:25424"/>
        <dbReference type="ChEBI" id="CHEBI:16235"/>
        <dbReference type="ChEBI" id="CHEBI:33019"/>
        <dbReference type="ChEBI" id="CHEBI:58017"/>
        <dbReference type="ChEBI" id="CHEBI:58115"/>
    </reaction>
    <physiologicalReaction direction="right-to-left" evidence="1">
        <dbReference type="Rhea" id="RHEA:25426"/>
    </physiologicalReaction>
</comment>
<comment type="catalytic activity">
    <reaction evidence="1">
        <text>XMP + diphosphate = xanthine + 5-phospho-alpha-D-ribose 1-diphosphate</text>
        <dbReference type="Rhea" id="RHEA:10800"/>
        <dbReference type="ChEBI" id="CHEBI:17712"/>
        <dbReference type="ChEBI" id="CHEBI:33019"/>
        <dbReference type="ChEBI" id="CHEBI:57464"/>
        <dbReference type="ChEBI" id="CHEBI:58017"/>
        <dbReference type="EC" id="2.4.2.22"/>
    </reaction>
    <physiologicalReaction direction="right-to-left" evidence="1">
        <dbReference type="Rhea" id="RHEA:10802"/>
    </physiologicalReaction>
</comment>
<comment type="catalytic activity">
    <reaction evidence="1">
        <text>IMP + diphosphate = hypoxanthine + 5-phospho-alpha-D-ribose 1-diphosphate</text>
        <dbReference type="Rhea" id="RHEA:17973"/>
        <dbReference type="ChEBI" id="CHEBI:17368"/>
        <dbReference type="ChEBI" id="CHEBI:33019"/>
        <dbReference type="ChEBI" id="CHEBI:58017"/>
        <dbReference type="ChEBI" id="CHEBI:58053"/>
    </reaction>
    <physiologicalReaction direction="right-to-left" evidence="1">
        <dbReference type="Rhea" id="RHEA:17975"/>
    </physiologicalReaction>
</comment>
<comment type="cofactor">
    <cofactor evidence="1">
        <name>Mg(2+)</name>
        <dbReference type="ChEBI" id="CHEBI:18420"/>
    </cofactor>
</comment>
<comment type="pathway">
    <text evidence="1">Purine metabolism; GMP biosynthesis via salvage pathway; GMP from guanine: step 1/1.</text>
</comment>
<comment type="pathway">
    <text evidence="1">Purine metabolism; XMP biosynthesis via salvage pathway; XMP from xanthine: step 1/1.</text>
</comment>
<comment type="subunit">
    <text evidence="1">Homotetramer.</text>
</comment>
<comment type="subcellular location">
    <subcellularLocation>
        <location evidence="1">Cell inner membrane</location>
        <topology evidence="1">Peripheral membrane protein</topology>
    </subcellularLocation>
</comment>
<comment type="similarity">
    <text evidence="1">Belongs to the purine/pyrimidine phosphoribosyltransferase family. XGPT subfamily.</text>
</comment>
<organism>
    <name type="scientific">Idiomarina loihiensis (strain ATCC BAA-735 / DSM 15497 / L2-TR)</name>
    <dbReference type="NCBI Taxonomy" id="283942"/>
    <lineage>
        <taxon>Bacteria</taxon>
        <taxon>Pseudomonadati</taxon>
        <taxon>Pseudomonadota</taxon>
        <taxon>Gammaproteobacteria</taxon>
        <taxon>Alteromonadales</taxon>
        <taxon>Idiomarinaceae</taxon>
        <taxon>Idiomarina</taxon>
    </lineage>
</organism>
<name>XGPT_IDILO</name>
<gene>
    <name evidence="1" type="primary">gpt</name>
    <name type="ordered locus">IL0887</name>
</gene>
<feature type="chain" id="PRO_0000139674" description="Xanthine-guanine phosphoribosyltransferase">
    <location>
        <begin position="1"/>
        <end position="161"/>
    </location>
</feature>
<feature type="binding site" evidence="1">
    <location>
        <begin position="41"/>
        <end position="42"/>
    </location>
    <ligand>
        <name>5-phospho-alpha-D-ribose 1-diphosphate</name>
        <dbReference type="ChEBI" id="CHEBI:58017"/>
    </ligand>
</feature>
<feature type="binding site" evidence="1">
    <location>
        <begin position="95"/>
        <end position="103"/>
    </location>
    <ligand>
        <name>5-phospho-alpha-D-ribose 1-diphosphate</name>
        <dbReference type="ChEBI" id="CHEBI:58017"/>
    </ligand>
</feature>
<feature type="binding site" evidence="1">
    <location>
        <position position="96"/>
    </location>
    <ligand>
        <name>Mg(2+)</name>
        <dbReference type="ChEBI" id="CHEBI:18420"/>
    </ligand>
</feature>
<feature type="binding site" evidence="1">
    <location>
        <begin position="99"/>
        <end position="103"/>
    </location>
    <ligand>
        <name>GMP</name>
        <dbReference type="ChEBI" id="CHEBI:58115"/>
    </ligand>
</feature>
<feature type="binding site" evidence="1">
    <location>
        <position position="99"/>
    </location>
    <ligand>
        <name>guanine</name>
        <dbReference type="ChEBI" id="CHEBI:16235"/>
    </ligand>
</feature>
<feature type="binding site" evidence="1">
    <location>
        <position position="99"/>
    </location>
    <ligand>
        <name>xanthine</name>
        <dbReference type="ChEBI" id="CHEBI:17712"/>
    </ligand>
</feature>
<feature type="binding site" evidence="1">
    <location>
        <begin position="141"/>
        <end position="142"/>
    </location>
    <ligand>
        <name>GMP</name>
        <dbReference type="ChEBI" id="CHEBI:58115"/>
    </ligand>
</feature>
<feature type="binding site" evidence="1">
    <location>
        <position position="142"/>
    </location>
    <ligand>
        <name>guanine</name>
        <dbReference type="ChEBI" id="CHEBI:16235"/>
    </ligand>
</feature>
<feature type="binding site" evidence="1">
    <location>
        <position position="142"/>
    </location>
    <ligand>
        <name>xanthine</name>
        <dbReference type="ChEBI" id="CHEBI:17712"/>
    </ligand>
</feature>
<protein>
    <recommendedName>
        <fullName evidence="1">Xanthine-guanine phosphoribosyltransferase</fullName>
        <shortName evidence="1">XGPRT</shortName>
        <ecNumber evidence="1">2.4.2.-</ecNumber>
        <ecNumber evidence="1">2.4.2.22</ecNumber>
    </recommendedName>
    <alternativeName>
        <fullName evidence="1">Xanthine phosphoribosyltransferase</fullName>
    </alternativeName>
</protein>
<keyword id="KW-0997">Cell inner membrane</keyword>
<keyword id="KW-1003">Cell membrane</keyword>
<keyword id="KW-0328">Glycosyltransferase</keyword>
<keyword id="KW-0460">Magnesium</keyword>
<keyword id="KW-0472">Membrane</keyword>
<keyword id="KW-0479">Metal-binding</keyword>
<keyword id="KW-0660">Purine salvage</keyword>
<keyword id="KW-1185">Reference proteome</keyword>
<keyword id="KW-0808">Transferase</keyword>
<proteinExistence type="inferred from homology"/>
<accession>Q5QW45</accession>
<reference key="1">
    <citation type="journal article" date="2004" name="Proc. Natl. Acad. Sci. U.S.A.">
        <title>Genome sequence of the deep-sea gamma-proteobacterium Idiomarina loihiensis reveals amino acid fermentation as a source of carbon and energy.</title>
        <authorList>
            <person name="Hou S."/>
            <person name="Saw J.H."/>
            <person name="Lee K.S."/>
            <person name="Freitas T.A."/>
            <person name="Belisle C."/>
            <person name="Kawarabayasi Y."/>
            <person name="Donachie S.P."/>
            <person name="Pikina A."/>
            <person name="Galperin M.Y."/>
            <person name="Koonin E.V."/>
            <person name="Makarova K.S."/>
            <person name="Omelchenko M.V."/>
            <person name="Sorokin A."/>
            <person name="Wolf Y.I."/>
            <person name="Li Q.X."/>
            <person name="Keum Y.S."/>
            <person name="Campbell S."/>
            <person name="Denery J."/>
            <person name="Aizawa S."/>
            <person name="Shibata S."/>
            <person name="Malahoff A."/>
            <person name="Alam M."/>
        </authorList>
    </citation>
    <scope>NUCLEOTIDE SEQUENCE [LARGE SCALE GENOMIC DNA]</scope>
    <source>
        <strain>ATCC BAA-735 / DSM 15497 / L2-TR</strain>
    </source>
</reference>
<sequence length="161" mass="18408">MGWHSNREFFVSWEELHRATRELARRQLPAEQYKGIIAVSRGGLVPAAIVSRELNIRVVDCVAVSSYDHTEQRDDLQVMKDVTATEDGEGFLVVDDLVDTGNTMKFLRERLPKAKFVTVYAKPSGMEMVDDFVADLAQDTWIHFPWDMHLHYIEPLAGQES</sequence>